<protein>
    <recommendedName>
        <fullName>Insertion element IS1 3 protein InsA</fullName>
    </recommendedName>
    <alternativeName>
        <fullName>IS1c</fullName>
    </alternativeName>
</protein>
<proteinExistence type="inferred from homology"/>
<feature type="chain" id="PRO_0000393351" description="Insertion element IS1 3 protein InsA">
    <location>
        <begin position="1"/>
        <end position="91"/>
    </location>
</feature>
<accession>P0CF09</accession>
<accession>P03827</accession>
<accession>P0ADH0</accession>
<accession>P0C651</accession>
<accession>Q2EER2</accession>
<accession>Q2MCF5</accession>
<accession>Q2MCH2</accession>
<accession>Q933I5</accession>
<name>INSA3_ECOLI</name>
<gene>
    <name type="primary">insA3</name>
    <name type="ordered locus">b0275</name>
    <name type="ordered locus">JW0269</name>
</gene>
<evidence type="ECO:0000305" key="1"/>
<comment type="function">
    <text>Absolutely required for transposition of IS1.</text>
</comment>
<comment type="similarity">
    <text evidence="1">Belongs to the IS1 elements InsA family.</text>
</comment>
<reference key="1">
    <citation type="journal article" date="1991" name="Gene">
        <title>Four types of IS1 with differences in nucleotide sequence reside in the Escherichia coli K-12 chromosome.</title>
        <authorList>
            <person name="Umeda M."/>
            <person name="Ohtsubo E."/>
        </authorList>
    </citation>
    <scope>NUCLEOTIDE SEQUENCE [GENOMIC DNA]</scope>
    <source>
        <strain>K12 / W3110 / ATCC 27325 / DSM 5911</strain>
    </source>
</reference>
<reference key="2">
    <citation type="submission" date="1996-02" db="EMBL/GenBank/DDBJ databases">
        <title>Systematic sequencing of the Escherichia coli genome: analysis of the 4.0 - 6.0 min (189,987 - 281,416bp) region.</title>
        <authorList>
            <person name="Takemoto K."/>
            <person name="Mori H."/>
            <person name="Murayama N."/>
            <person name="Kataoka K."/>
            <person name="Yano M."/>
            <person name="Itoh T."/>
            <person name="Yamamoto Y."/>
            <person name="Inokuchi H."/>
            <person name="Miki T."/>
            <person name="Hatada E."/>
            <person name="Fukuda R."/>
            <person name="Ichihara S."/>
            <person name="Mizuno T."/>
            <person name="Makino K."/>
            <person name="Nakata A."/>
            <person name="Yura T."/>
            <person name="Sampei G."/>
            <person name="Mizobuchi K."/>
        </authorList>
    </citation>
    <scope>NUCLEOTIDE SEQUENCE [LARGE SCALE GENOMIC DNA]</scope>
    <source>
        <strain>K12 / W3110 / ATCC 27325 / DSM 5911</strain>
    </source>
</reference>
<reference key="3">
    <citation type="submission" date="1997-01" db="EMBL/GenBank/DDBJ databases">
        <title>Sequence of minutes 4-25 of Escherichia coli.</title>
        <authorList>
            <person name="Chung E."/>
            <person name="Allen E."/>
            <person name="Araujo R."/>
            <person name="Aparicio A.M."/>
            <person name="Davis K."/>
            <person name="Duncan M."/>
            <person name="Federspiel N."/>
            <person name="Hyman R."/>
            <person name="Kalman S."/>
            <person name="Komp C."/>
            <person name="Kurdi O."/>
            <person name="Lew H."/>
            <person name="Lin D."/>
            <person name="Namath A."/>
            <person name="Oefner P."/>
            <person name="Roberts D."/>
            <person name="Schramm S."/>
            <person name="Davis R.W."/>
        </authorList>
    </citation>
    <scope>NUCLEOTIDE SEQUENCE [LARGE SCALE GENOMIC DNA]</scope>
    <source>
        <strain>K12 / MG1655 / ATCC 47076</strain>
    </source>
</reference>
<reference key="4">
    <citation type="journal article" date="1997" name="Science">
        <title>The complete genome sequence of Escherichia coli K-12.</title>
        <authorList>
            <person name="Blattner F.R."/>
            <person name="Plunkett G. III"/>
            <person name="Bloch C.A."/>
            <person name="Perna N.T."/>
            <person name="Burland V."/>
            <person name="Riley M."/>
            <person name="Collado-Vides J."/>
            <person name="Glasner J.D."/>
            <person name="Rode C.K."/>
            <person name="Mayhew G.F."/>
            <person name="Gregor J."/>
            <person name="Davis N.W."/>
            <person name="Kirkpatrick H.A."/>
            <person name="Goeden M.A."/>
            <person name="Rose D.J."/>
            <person name="Mau B."/>
            <person name="Shao Y."/>
        </authorList>
    </citation>
    <scope>NUCLEOTIDE SEQUENCE [LARGE SCALE GENOMIC DNA]</scope>
    <source>
        <strain>K12 / MG1655 / ATCC 47076</strain>
    </source>
</reference>
<reference key="5">
    <citation type="journal article" date="2006" name="Mol. Syst. Biol.">
        <title>Highly accurate genome sequences of Escherichia coli K-12 strains MG1655 and W3110.</title>
        <authorList>
            <person name="Hayashi K."/>
            <person name="Morooka N."/>
            <person name="Yamamoto Y."/>
            <person name="Fujita K."/>
            <person name="Isono K."/>
            <person name="Choi S."/>
            <person name="Ohtsubo E."/>
            <person name="Baba T."/>
            <person name="Wanner B.L."/>
            <person name="Mori H."/>
            <person name="Horiuchi T."/>
        </authorList>
    </citation>
    <scope>NUCLEOTIDE SEQUENCE [LARGE SCALE GENOMIC DNA]</scope>
    <source>
        <strain>K12 / W3110 / ATCC 27325 / DSM 5911</strain>
    </source>
</reference>
<dbReference type="EMBL" id="X52535">
    <property type="protein sequence ID" value="CAA36771.1"/>
    <property type="molecule type" value="Genomic_DNA"/>
</dbReference>
<dbReference type="EMBL" id="U00096">
    <property type="protein sequence ID" value="AAC73378.1"/>
    <property type="molecule type" value="Genomic_DNA"/>
</dbReference>
<dbReference type="EMBL" id="AP009048">
    <property type="protein sequence ID" value="BAE76059.1"/>
    <property type="molecule type" value="Genomic_DNA"/>
</dbReference>
<dbReference type="PIR" id="B93826">
    <property type="entry name" value="IEECB9"/>
</dbReference>
<dbReference type="PIR" id="JN0134">
    <property type="entry name" value="JN0134"/>
</dbReference>
<dbReference type="RefSeq" id="NP_414809.1">
    <property type="nucleotide sequence ID" value="NC_000913.3"/>
</dbReference>
<dbReference type="FunCoup" id="P0CF09">
    <property type="interactions" value="14"/>
</dbReference>
<dbReference type="EnsemblBacteria" id="AAC73378">
    <property type="protein sequence ID" value="AAC73378"/>
    <property type="gene ID" value="b0275"/>
</dbReference>
<dbReference type="GeneID" id="944951"/>
<dbReference type="KEGG" id="ecj:JW0269"/>
<dbReference type="KEGG" id="eco:b0265"/>
<dbReference type="KEGG" id="eco:b0275"/>
<dbReference type="KEGG" id="eco:b4516"/>
<dbReference type="KEGG" id="ecoc:C3026_01280"/>
<dbReference type="EchoBASE" id="EB4708"/>
<dbReference type="HOGENOM" id="CLU_076276_6_3_6"/>
<dbReference type="InParanoid" id="P0CF09"/>
<dbReference type="OMA" id="KACEPCT"/>
<dbReference type="PhylomeDB" id="P0CF09"/>
<dbReference type="BioCyc" id="EcoCyc:MONOMER0-4227"/>
<dbReference type="PRO" id="PR:P0CF09"/>
<dbReference type="Proteomes" id="UP000000625">
    <property type="component" value="Chromosome"/>
</dbReference>
<dbReference type="GO" id="GO:0006313">
    <property type="term" value="P:DNA transposition"/>
    <property type="evidence" value="ECO:0000318"/>
    <property type="project" value="GO_Central"/>
</dbReference>
<dbReference type="InterPro" id="IPR024431">
    <property type="entry name" value="InsA_HTH_dom"/>
</dbReference>
<dbReference type="InterPro" id="IPR003220">
    <property type="entry name" value="InsA_N_dom_Znf"/>
</dbReference>
<dbReference type="InterPro" id="IPR051252">
    <property type="entry name" value="IS1_transposase_InsA"/>
</dbReference>
<dbReference type="PANTHER" id="PTHR47923">
    <property type="entry name" value="INSERTION ELEMENT IS1 1 PROTEIN INSA-RELATED"/>
    <property type="match status" value="1"/>
</dbReference>
<dbReference type="PANTHER" id="PTHR47923:SF1">
    <property type="entry name" value="INSERTION ELEMENT IS1 1 PROTEIN INSA-RELATED"/>
    <property type="match status" value="1"/>
</dbReference>
<dbReference type="Pfam" id="PF12759">
    <property type="entry name" value="HTH_Tnp_IS1"/>
    <property type="match status" value="1"/>
</dbReference>
<dbReference type="Pfam" id="PF03811">
    <property type="entry name" value="Zn_ribbon_InsA"/>
    <property type="match status" value="1"/>
</dbReference>
<organism>
    <name type="scientific">Escherichia coli (strain K12)</name>
    <dbReference type="NCBI Taxonomy" id="83333"/>
    <lineage>
        <taxon>Bacteria</taxon>
        <taxon>Pseudomonadati</taxon>
        <taxon>Pseudomonadota</taxon>
        <taxon>Gammaproteobacteria</taxon>
        <taxon>Enterobacterales</taxon>
        <taxon>Enterobacteriaceae</taxon>
        <taxon>Escherichia</taxon>
    </lineage>
</organism>
<sequence length="91" mass="9902">MASVSISCPSCSATDGVVRNGKSTAGHQRYLCSHCRKTWQLQFTYTASQPGTHQKIIDMAMNGVGCRATARIMGVGLNTIFRHLKNSGRSR</sequence>
<keyword id="KW-0233">DNA recombination</keyword>
<keyword id="KW-1185">Reference proteome</keyword>
<keyword id="KW-0814">Transposable element</keyword>
<keyword id="KW-0815">Transposition</keyword>